<accession>Q0HIS7</accession>
<sequence length="428" mass="46869">MLDPKFLRNELAVTAERLATRGFILDVAHLTQLEEKRKSLQVATEELQASRNAISKSIGQAKARGEDVDAIMAQVGDLGAQLDAKKVELAAVLEEVNAIAMSMPNLPDESAPIGADETENVEIRRWGTPRSFDFPVKDHIDLGEGLNGLDFKSAVKITGSRFIVMKGQIARLNRALGQFMLDLHTTEHGYTEAYVPLLVNEASLLGTGQLPKFGEDLFHTKPATEEGQGLSLIPTAEVPLTNLVRDSIVDEDELPIKLTAHTACFRSEAGSYGKDTRGLIRQHQFDKVELVQLVKPEDSMAALEALTGHAETVLQRLGLPYRTVILCTGDMGFGSSKTYDIEVWLPGQNTYREISSCSNMKDFQARRMQARYRVKADNKPALLHTLNGSGLAVGRTLVAILENYQNADGSVTIPEALRPYMGGLTQIG</sequence>
<reference key="1">
    <citation type="submission" date="2006-08" db="EMBL/GenBank/DDBJ databases">
        <title>Complete sequence of Shewanella sp. MR-4.</title>
        <authorList>
            <consortium name="US DOE Joint Genome Institute"/>
            <person name="Copeland A."/>
            <person name="Lucas S."/>
            <person name="Lapidus A."/>
            <person name="Barry K."/>
            <person name="Detter J.C."/>
            <person name="Glavina del Rio T."/>
            <person name="Hammon N."/>
            <person name="Israni S."/>
            <person name="Dalin E."/>
            <person name="Tice H."/>
            <person name="Pitluck S."/>
            <person name="Kiss H."/>
            <person name="Brettin T."/>
            <person name="Bruce D."/>
            <person name="Han C."/>
            <person name="Tapia R."/>
            <person name="Gilna P."/>
            <person name="Schmutz J."/>
            <person name="Larimer F."/>
            <person name="Land M."/>
            <person name="Hauser L."/>
            <person name="Kyrpides N."/>
            <person name="Mikhailova N."/>
            <person name="Nealson K."/>
            <person name="Konstantinidis K."/>
            <person name="Klappenbach J."/>
            <person name="Tiedje J."/>
            <person name="Richardson P."/>
        </authorList>
    </citation>
    <scope>NUCLEOTIDE SEQUENCE [LARGE SCALE GENOMIC DNA]</scope>
    <source>
        <strain>MR-4</strain>
    </source>
</reference>
<organism>
    <name type="scientific">Shewanella sp. (strain MR-4)</name>
    <dbReference type="NCBI Taxonomy" id="60480"/>
    <lineage>
        <taxon>Bacteria</taxon>
        <taxon>Pseudomonadati</taxon>
        <taxon>Pseudomonadota</taxon>
        <taxon>Gammaproteobacteria</taxon>
        <taxon>Alteromonadales</taxon>
        <taxon>Shewanellaceae</taxon>
        <taxon>Shewanella</taxon>
    </lineage>
</organism>
<proteinExistence type="inferred from homology"/>
<keyword id="KW-0030">Aminoacyl-tRNA synthetase</keyword>
<keyword id="KW-0067">ATP-binding</keyword>
<keyword id="KW-0963">Cytoplasm</keyword>
<keyword id="KW-0436">Ligase</keyword>
<keyword id="KW-0547">Nucleotide-binding</keyword>
<keyword id="KW-0648">Protein biosynthesis</keyword>
<comment type="function">
    <text evidence="1">Catalyzes the attachment of serine to tRNA(Ser). Is also able to aminoacylate tRNA(Sec) with serine, to form the misacylated tRNA L-seryl-tRNA(Sec), which will be further converted into selenocysteinyl-tRNA(Sec).</text>
</comment>
<comment type="catalytic activity">
    <reaction evidence="1">
        <text>tRNA(Ser) + L-serine + ATP = L-seryl-tRNA(Ser) + AMP + diphosphate + H(+)</text>
        <dbReference type="Rhea" id="RHEA:12292"/>
        <dbReference type="Rhea" id="RHEA-COMP:9669"/>
        <dbReference type="Rhea" id="RHEA-COMP:9703"/>
        <dbReference type="ChEBI" id="CHEBI:15378"/>
        <dbReference type="ChEBI" id="CHEBI:30616"/>
        <dbReference type="ChEBI" id="CHEBI:33019"/>
        <dbReference type="ChEBI" id="CHEBI:33384"/>
        <dbReference type="ChEBI" id="CHEBI:78442"/>
        <dbReference type="ChEBI" id="CHEBI:78533"/>
        <dbReference type="ChEBI" id="CHEBI:456215"/>
        <dbReference type="EC" id="6.1.1.11"/>
    </reaction>
</comment>
<comment type="catalytic activity">
    <reaction evidence="1">
        <text>tRNA(Sec) + L-serine + ATP = L-seryl-tRNA(Sec) + AMP + diphosphate + H(+)</text>
        <dbReference type="Rhea" id="RHEA:42580"/>
        <dbReference type="Rhea" id="RHEA-COMP:9742"/>
        <dbReference type="Rhea" id="RHEA-COMP:10128"/>
        <dbReference type="ChEBI" id="CHEBI:15378"/>
        <dbReference type="ChEBI" id="CHEBI:30616"/>
        <dbReference type="ChEBI" id="CHEBI:33019"/>
        <dbReference type="ChEBI" id="CHEBI:33384"/>
        <dbReference type="ChEBI" id="CHEBI:78442"/>
        <dbReference type="ChEBI" id="CHEBI:78533"/>
        <dbReference type="ChEBI" id="CHEBI:456215"/>
        <dbReference type="EC" id="6.1.1.11"/>
    </reaction>
</comment>
<comment type="pathway">
    <text evidence="1">Aminoacyl-tRNA biosynthesis; selenocysteinyl-tRNA(Sec) biosynthesis; L-seryl-tRNA(Sec) from L-serine and tRNA(Sec): step 1/1.</text>
</comment>
<comment type="subunit">
    <text evidence="1">Homodimer. The tRNA molecule binds across the dimer.</text>
</comment>
<comment type="subcellular location">
    <subcellularLocation>
        <location evidence="1">Cytoplasm</location>
    </subcellularLocation>
</comment>
<comment type="domain">
    <text evidence="1">Consists of two distinct domains, a catalytic core and a N-terminal extension that is involved in tRNA binding.</text>
</comment>
<comment type="similarity">
    <text evidence="1">Belongs to the class-II aminoacyl-tRNA synthetase family. Type-1 seryl-tRNA synthetase subfamily.</text>
</comment>
<protein>
    <recommendedName>
        <fullName evidence="1">Serine--tRNA ligase</fullName>
        <ecNumber evidence="1">6.1.1.11</ecNumber>
    </recommendedName>
    <alternativeName>
        <fullName evidence="1">Seryl-tRNA synthetase</fullName>
        <shortName evidence="1">SerRS</shortName>
    </alternativeName>
    <alternativeName>
        <fullName evidence="1">Seryl-tRNA(Ser/Sec) synthetase</fullName>
    </alternativeName>
</protein>
<name>SYS_SHESM</name>
<gene>
    <name evidence="1" type="primary">serS</name>
    <name type="ordered locus">Shewmr4_1967</name>
</gene>
<dbReference type="EC" id="6.1.1.11" evidence="1"/>
<dbReference type="EMBL" id="CP000446">
    <property type="protein sequence ID" value="ABI39040.1"/>
    <property type="molecule type" value="Genomic_DNA"/>
</dbReference>
<dbReference type="RefSeq" id="WP_011622733.1">
    <property type="nucleotide sequence ID" value="NC_008321.1"/>
</dbReference>
<dbReference type="SMR" id="Q0HIS7"/>
<dbReference type="KEGG" id="she:Shewmr4_1967"/>
<dbReference type="HOGENOM" id="CLU_023797_1_1_6"/>
<dbReference type="UniPathway" id="UPA00906">
    <property type="reaction ID" value="UER00895"/>
</dbReference>
<dbReference type="GO" id="GO:0005737">
    <property type="term" value="C:cytoplasm"/>
    <property type="evidence" value="ECO:0007669"/>
    <property type="project" value="UniProtKB-SubCell"/>
</dbReference>
<dbReference type="GO" id="GO:0005524">
    <property type="term" value="F:ATP binding"/>
    <property type="evidence" value="ECO:0007669"/>
    <property type="project" value="UniProtKB-UniRule"/>
</dbReference>
<dbReference type="GO" id="GO:0004828">
    <property type="term" value="F:serine-tRNA ligase activity"/>
    <property type="evidence" value="ECO:0007669"/>
    <property type="project" value="UniProtKB-UniRule"/>
</dbReference>
<dbReference type="GO" id="GO:0016260">
    <property type="term" value="P:selenocysteine biosynthetic process"/>
    <property type="evidence" value="ECO:0007669"/>
    <property type="project" value="UniProtKB-UniRule"/>
</dbReference>
<dbReference type="GO" id="GO:0006434">
    <property type="term" value="P:seryl-tRNA aminoacylation"/>
    <property type="evidence" value="ECO:0007669"/>
    <property type="project" value="UniProtKB-UniRule"/>
</dbReference>
<dbReference type="CDD" id="cd00770">
    <property type="entry name" value="SerRS_core"/>
    <property type="match status" value="1"/>
</dbReference>
<dbReference type="Gene3D" id="3.30.930.10">
    <property type="entry name" value="Bira Bifunctional Protein, Domain 2"/>
    <property type="match status" value="1"/>
</dbReference>
<dbReference type="Gene3D" id="1.10.287.40">
    <property type="entry name" value="Serine-tRNA synthetase, tRNA binding domain"/>
    <property type="match status" value="1"/>
</dbReference>
<dbReference type="HAMAP" id="MF_00176">
    <property type="entry name" value="Ser_tRNA_synth_type1"/>
    <property type="match status" value="1"/>
</dbReference>
<dbReference type="InterPro" id="IPR002314">
    <property type="entry name" value="aa-tRNA-synt_IIb"/>
</dbReference>
<dbReference type="InterPro" id="IPR006195">
    <property type="entry name" value="aa-tRNA-synth_II"/>
</dbReference>
<dbReference type="InterPro" id="IPR045864">
    <property type="entry name" value="aa-tRNA-synth_II/BPL/LPL"/>
</dbReference>
<dbReference type="InterPro" id="IPR002317">
    <property type="entry name" value="Ser-tRNA-ligase_type_1"/>
</dbReference>
<dbReference type="InterPro" id="IPR015866">
    <property type="entry name" value="Ser-tRNA-synth_1_N"/>
</dbReference>
<dbReference type="InterPro" id="IPR042103">
    <property type="entry name" value="SerRS_1_N_sf"/>
</dbReference>
<dbReference type="InterPro" id="IPR033729">
    <property type="entry name" value="SerRS_core"/>
</dbReference>
<dbReference type="InterPro" id="IPR010978">
    <property type="entry name" value="tRNA-bd_arm"/>
</dbReference>
<dbReference type="NCBIfam" id="TIGR00414">
    <property type="entry name" value="serS"/>
    <property type="match status" value="1"/>
</dbReference>
<dbReference type="PANTHER" id="PTHR43697:SF1">
    <property type="entry name" value="SERINE--TRNA LIGASE"/>
    <property type="match status" value="1"/>
</dbReference>
<dbReference type="PANTHER" id="PTHR43697">
    <property type="entry name" value="SERYL-TRNA SYNTHETASE"/>
    <property type="match status" value="1"/>
</dbReference>
<dbReference type="Pfam" id="PF02403">
    <property type="entry name" value="Seryl_tRNA_N"/>
    <property type="match status" value="1"/>
</dbReference>
<dbReference type="Pfam" id="PF00587">
    <property type="entry name" value="tRNA-synt_2b"/>
    <property type="match status" value="1"/>
</dbReference>
<dbReference type="PIRSF" id="PIRSF001529">
    <property type="entry name" value="Ser-tRNA-synth_IIa"/>
    <property type="match status" value="1"/>
</dbReference>
<dbReference type="PRINTS" id="PR00981">
    <property type="entry name" value="TRNASYNTHSER"/>
</dbReference>
<dbReference type="SUPFAM" id="SSF55681">
    <property type="entry name" value="Class II aaRS and biotin synthetases"/>
    <property type="match status" value="1"/>
</dbReference>
<dbReference type="SUPFAM" id="SSF46589">
    <property type="entry name" value="tRNA-binding arm"/>
    <property type="match status" value="1"/>
</dbReference>
<dbReference type="PROSITE" id="PS50862">
    <property type="entry name" value="AA_TRNA_LIGASE_II"/>
    <property type="match status" value="1"/>
</dbReference>
<feature type="chain" id="PRO_1000019816" description="Serine--tRNA ligase">
    <location>
        <begin position="1"/>
        <end position="428"/>
    </location>
</feature>
<feature type="binding site" evidence="1">
    <location>
        <begin position="235"/>
        <end position="237"/>
    </location>
    <ligand>
        <name>L-serine</name>
        <dbReference type="ChEBI" id="CHEBI:33384"/>
    </ligand>
</feature>
<feature type="binding site" evidence="1">
    <location>
        <begin position="266"/>
        <end position="268"/>
    </location>
    <ligand>
        <name>ATP</name>
        <dbReference type="ChEBI" id="CHEBI:30616"/>
    </ligand>
</feature>
<feature type="binding site" evidence="1">
    <location>
        <position position="289"/>
    </location>
    <ligand>
        <name>L-serine</name>
        <dbReference type="ChEBI" id="CHEBI:33384"/>
    </ligand>
</feature>
<feature type="binding site" evidence="1">
    <location>
        <begin position="353"/>
        <end position="356"/>
    </location>
    <ligand>
        <name>ATP</name>
        <dbReference type="ChEBI" id="CHEBI:30616"/>
    </ligand>
</feature>
<feature type="binding site" evidence="1">
    <location>
        <position position="389"/>
    </location>
    <ligand>
        <name>L-serine</name>
        <dbReference type="ChEBI" id="CHEBI:33384"/>
    </ligand>
</feature>
<evidence type="ECO:0000255" key="1">
    <source>
        <dbReference type="HAMAP-Rule" id="MF_00176"/>
    </source>
</evidence>